<dbReference type="EC" id="4.2.1.19" evidence="1"/>
<dbReference type="EMBL" id="CP000458">
    <property type="protein sequence ID" value="ABK07181.1"/>
    <property type="molecule type" value="Genomic_DNA"/>
</dbReference>
<dbReference type="RefSeq" id="WP_011546606.1">
    <property type="nucleotide sequence ID" value="NC_008542.1"/>
</dbReference>
<dbReference type="SMR" id="A0K3V4"/>
<dbReference type="GeneID" id="55505223"/>
<dbReference type="KEGG" id="bch:Bcen2424_0427"/>
<dbReference type="HOGENOM" id="CLU_044308_2_0_4"/>
<dbReference type="UniPathway" id="UPA00031">
    <property type="reaction ID" value="UER00011"/>
</dbReference>
<dbReference type="GO" id="GO:0005737">
    <property type="term" value="C:cytoplasm"/>
    <property type="evidence" value="ECO:0007669"/>
    <property type="project" value="UniProtKB-SubCell"/>
</dbReference>
<dbReference type="GO" id="GO:0004424">
    <property type="term" value="F:imidazoleglycerol-phosphate dehydratase activity"/>
    <property type="evidence" value="ECO:0007669"/>
    <property type="project" value="UniProtKB-UniRule"/>
</dbReference>
<dbReference type="GO" id="GO:0000105">
    <property type="term" value="P:L-histidine biosynthetic process"/>
    <property type="evidence" value="ECO:0007669"/>
    <property type="project" value="UniProtKB-UniRule"/>
</dbReference>
<dbReference type="CDD" id="cd07914">
    <property type="entry name" value="IGPD"/>
    <property type="match status" value="1"/>
</dbReference>
<dbReference type="FunFam" id="3.30.230.40:FF:000002">
    <property type="entry name" value="Imidazoleglycerol-phosphate dehydratase"/>
    <property type="match status" value="1"/>
</dbReference>
<dbReference type="FunFam" id="3.30.230.40:FF:000003">
    <property type="entry name" value="Imidazoleglycerol-phosphate dehydratase HisB"/>
    <property type="match status" value="1"/>
</dbReference>
<dbReference type="Gene3D" id="3.30.230.40">
    <property type="entry name" value="Imidazole glycerol phosphate dehydratase, domain 1"/>
    <property type="match status" value="2"/>
</dbReference>
<dbReference type="HAMAP" id="MF_00076">
    <property type="entry name" value="HisB"/>
    <property type="match status" value="1"/>
</dbReference>
<dbReference type="InterPro" id="IPR038494">
    <property type="entry name" value="IGPD_sf"/>
</dbReference>
<dbReference type="InterPro" id="IPR000807">
    <property type="entry name" value="ImidazoleglycerolP_deHydtase"/>
</dbReference>
<dbReference type="InterPro" id="IPR020565">
    <property type="entry name" value="ImidazoleglycerP_deHydtase_CS"/>
</dbReference>
<dbReference type="InterPro" id="IPR020568">
    <property type="entry name" value="Ribosomal_Su5_D2-typ_SF"/>
</dbReference>
<dbReference type="NCBIfam" id="NF002106">
    <property type="entry name" value="PRK00951.1-1"/>
    <property type="match status" value="1"/>
</dbReference>
<dbReference type="NCBIfam" id="NF002109">
    <property type="entry name" value="PRK00951.1-5"/>
    <property type="match status" value="1"/>
</dbReference>
<dbReference type="NCBIfam" id="NF002111">
    <property type="entry name" value="PRK00951.2-1"/>
    <property type="match status" value="1"/>
</dbReference>
<dbReference type="NCBIfam" id="NF002114">
    <property type="entry name" value="PRK00951.2-4"/>
    <property type="match status" value="1"/>
</dbReference>
<dbReference type="PANTHER" id="PTHR23133:SF2">
    <property type="entry name" value="IMIDAZOLEGLYCEROL-PHOSPHATE DEHYDRATASE"/>
    <property type="match status" value="1"/>
</dbReference>
<dbReference type="PANTHER" id="PTHR23133">
    <property type="entry name" value="IMIDAZOLEGLYCEROL-PHOSPHATE DEHYDRATASE HIS7"/>
    <property type="match status" value="1"/>
</dbReference>
<dbReference type="Pfam" id="PF00475">
    <property type="entry name" value="IGPD"/>
    <property type="match status" value="1"/>
</dbReference>
<dbReference type="SUPFAM" id="SSF54211">
    <property type="entry name" value="Ribosomal protein S5 domain 2-like"/>
    <property type="match status" value="2"/>
</dbReference>
<dbReference type="PROSITE" id="PS00954">
    <property type="entry name" value="IGP_DEHYDRATASE_1"/>
    <property type="match status" value="1"/>
</dbReference>
<dbReference type="PROSITE" id="PS00955">
    <property type="entry name" value="IGP_DEHYDRATASE_2"/>
    <property type="match status" value="1"/>
</dbReference>
<evidence type="ECO:0000255" key="1">
    <source>
        <dbReference type="HAMAP-Rule" id="MF_00076"/>
    </source>
</evidence>
<reference key="1">
    <citation type="submission" date="2006-08" db="EMBL/GenBank/DDBJ databases">
        <title>Complete sequence of chromosome 1 of Burkholderia cenocepacia HI2424.</title>
        <authorList>
            <person name="Copeland A."/>
            <person name="Lucas S."/>
            <person name="Lapidus A."/>
            <person name="Barry K."/>
            <person name="Detter J.C."/>
            <person name="Glavina del Rio T."/>
            <person name="Hammon N."/>
            <person name="Israni S."/>
            <person name="Pitluck S."/>
            <person name="Chain P."/>
            <person name="Malfatti S."/>
            <person name="Shin M."/>
            <person name="Vergez L."/>
            <person name="Schmutz J."/>
            <person name="Larimer F."/>
            <person name="Land M."/>
            <person name="Hauser L."/>
            <person name="Kyrpides N."/>
            <person name="Kim E."/>
            <person name="LiPuma J.J."/>
            <person name="Gonzalez C.F."/>
            <person name="Konstantinidis K."/>
            <person name="Tiedje J.M."/>
            <person name="Richardson P."/>
        </authorList>
    </citation>
    <scope>NUCLEOTIDE SEQUENCE [LARGE SCALE GENOMIC DNA]</scope>
    <source>
        <strain>HI2424</strain>
    </source>
</reference>
<gene>
    <name evidence="1" type="primary">hisB</name>
    <name type="ordered locus">Bcen2424_0427</name>
</gene>
<organism>
    <name type="scientific">Burkholderia cenocepacia (strain HI2424)</name>
    <dbReference type="NCBI Taxonomy" id="331272"/>
    <lineage>
        <taxon>Bacteria</taxon>
        <taxon>Pseudomonadati</taxon>
        <taxon>Pseudomonadota</taxon>
        <taxon>Betaproteobacteria</taxon>
        <taxon>Burkholderiales</taxon>
        <taxon>Burkholderiaceae</taxon>
        <taxon>Burkholderia</taxon>
        <taxon>Burkholderia cepacia complex</taxon>
    </lineage>
</organism>
<name>HIS7_BURCH</name>
<comment type="catalytic activity">
    <reaction evidence="1">
        <text>D-erythro-1-(imidazol-4-yl)glycerol 3-phosphate = 3-(imidazol-4-yl)-2-oxopropyl phosphate + H2O</text>
        <dbReference type="Rhea" id="RHEA:11040"/>
        <dbReference type="ChEBI" id="CHEBI:15377"/>
        <dbReference type="ChEBI" id="CHEBI:57766"/>
        <dbReference type="ChEBI" id="CHEBI:58278"/>
        <dbReference type="EC" id="4.2.1.19"/>
    </reaction>
</comment>
<comment type="pathway">
    <text evidence="1">Amino-acid biosynthesis; L-histidine biosynthesis; L-histidine from 5-phospho-alpha-D-ribose 1-diphosphate: step 6/9.</text>
</comment>
<comment type="subcellular location">
    <subcellularLocation>
        <location evidence="1">Cytoplasm</location>
    </subcellularLocation>
</comment>
<comment type="similarity">
    <text evidence="1">Belongs to the imidazoleglycerol-phosphate dehydratase family.</text>
</comment>
<keyword id="KW-0028">Amino-acid biosynthesis</keyword>
<keyword id="KW-0963">Cytoplasm</keyword>
<keyword id="KW-0368">Histidine biosynthesis</keyword>
<keyword id="KW-0456">Lyase</keyword>
<protein>
    <recommendedName>
        <fullName evidence="1">Imidazoleglycerol-phosphate dehydratase</fullName>
        <shortName evidence="1">IGPD</shortName>
        <ecNumber evidence="1">4.2.1.19</ecNumber>
    </recommendedName>
</protein>
<sequence>MRVAEVVRNTSETQIRVKLDLDGTGRQKLATGVPFLDHMLDQIARHGLVDLEVEAHGDTHIDDHHTVEDVGITLGQAVAKAIGDRKGIRRYGHSYVPLDEALSRVVIDFSGRPGLEFHVPFTRARIGTFDVDLSIEFFRGFVNHAGVTLHIDNLRGINAHHQLETVFKAFGRALRAAVELDERAAGQIPSTKGSL</sequence>
<proteinExistence type="inferred from homology"/>
<feature type="chain" id="PRO_1000010253" description="Imidazoleglycerol-phosphate dehydratase">
    <location>
        <begin position="1"/>
        <end position="195"/>
    </location>
</feature>
<accession>A0K3V4</accession>